<accession>P13111</accession>
<geneLocation type="plasmid">
    <name>pDU1358</name>
</geneLocation>
<organism>
    <name type="scientific">Serratia marcescens</name>
    <dbReference type="NCBI Taxonomy" id="615"/>
    <lineage>
        <taxon>Bacteria</taxon>
        <taxon>Pseudomonadati</taxon>
        <taxon>Pseudomonadota</taxon>
        <taxon>Gammaproteobacteria</taxon>
        <taxon>Enterobacterales</taxon>
        <taxon>Yersiniaceae</taxon>
        <taxon>Serratia</taxon>
    </lineage>
</organism>
<feature type="chain" id="PRO_0000098140" description="Mercuric resistance operon regulatory protein">
    <location>
        <begin position="1"/>
        <end position="144"/>
    </location>
</feature>
<feature type="domain" description="HTH merR-type" evidence="1">
    <location>
        <begin position="7"/>
        <end position="76"/>
    </location>
</feature>
<feature type="DNA-binding region" description="H-T-H motif" evidence="1">
    <location>
        <begin position="10"/>
        <end position="29"/>
    </location>
</feature>
<feature type="binding site">
    <location>
        <position position="82"/>
    </location>
    <ligand>
        <name>Hg(2+)</name>
        <dbReference type="ChEBI" id="CHEBI:16793"/>
    </ligand>
</feature>
<feature type="binding site">
    <location>
        <position position="117"/>
    </location>
    <ligand>
        <name>Hg(2+)</name>
        <dbReference type="ChEBI" id="CHEBI:16793"/>
    </ligand>
</feature>
<feature type="binding site">
    <location>
        <position position="126"/>
    </location>
    <ligand>
        <name>Hg(2+)</name>
        <dbReference type="ChEBI" id="CHEBI:16793"/>
    </ligand>
</feature>
<comment type="function">
    <text>Mediates the mercuric-dependent induction of mercury resistance operon. In the absence of mercury MerR represses transcription by binding tightly to the mer operator region; when mercury is present the dimeric complex binds a single ion and becomes a potent transcriptional activator, while remaining bound to the mer site.</text>
</comment>
<sequence>MEKNLENLTIGVFAKAAGVNVETIRFYQRKGLLPEPDKPYGSIRRYGEADVTRVRFVKSAQRLGFSLDEIAELLRLDDGTHCEEASSLAEHKLQDVREKMTDLARMETVLSELVFACHARQGNVSCPLIASLQGEKEPRGADAV</sequence>
<name>MERR_SERMA</name>
<reference key="1">
    <citation type="journal article" date="1989" name="J. Bacteriol.">
        <title>Mercury operon regulation by the merR gene of the organomercurial resistance system of plasmid pDU1358.</title>
        <authorList>
            <person name="Nucifora G."/>
            <person name="Chu L."/>
            <person name="Silver S."/>
            <person name="Misra T.K."/>
        </authorList>
    </citation>
    <scope>NUCLEOTIDE SEQUENCE [GENOMIC DNA]</scope>
</reference>
<evidence type="ECO:0000255" key="1">
    <source>
        <dbReference type="PROSITE-ProRule" id="PRU00254"/>
    </source>
</evidence>
<keyword id="KW-0010">Activator</keyword>
<keyword id="KW-0238">DNA-binding</keyword>
<keyword id="KW-0475">Mercuric resistance</keyword>
<keyword id="KW-0476">Mercury</keyword>
<keyword id="KW-0479">Metal-binding</keyword>
<keyword id="KW-0614">Plasmid</keyword>
<keyword id="KW-0678">Repressor</keyword>
<keyword id="KW-0804">Transcription</keyword>
<keyword id="KW-0805">Transcription regulation</keyword>
<proteinExistence type="predicted"/>
<protein>
    <recommendedName>
        <fullName>Mercuric resistance operon regulatory protein</fullName>
    </recommendedName>
</protein>
<dbReference type="EMBL" id="M24940">
    <property type="protein sequence ID" value="AAA98221.1"/>
    <property type="molecule type" value="Genomic_DNA"/>
</dbReference>
<dbReference type="RefSeq" id="WP_000414383.1">
    <property type="nucleotide sequence ID" value="NZ_SWIB01000042.1"/>
</dbReference>
<dbReference type="SMR" id="P13111"/>
<dbReference type="GO" id="GO:0003677">
    <property type="term" value="F:DNA binding"/>
    <property type="evidence" value="ECO:0007669"/>
    <property type="project" value="UniProtKB-KW"/>
</dbReference>
<dbReference type="GO" id="GO:0003700">
    <property type="term" value="F:DNA-binding transcription factor activity"/>
    <property type="evidence" value="ECO:0007669"/>
    <property type="project" value="InterPro"/>
</dbReference>
<dbReference type="GO" id="GO:0045340">
    <property type="term" value="F:mercury ion binding"/>
    <property type="evidence" value="ECO:0007669"/>
    <property type="project" value="InterPro"/>
</dbReference>
<dbReference type="GO" id="GO:0046689">
    <property type="term" value="P:response to mercury ion"/>
    <property type="evidence" value="ECO:0007669"/>
    <property type="project" value="UniProtKB-KW"/>
</dbReference>
<dbReference type="CDD" id="cd04783">
    <property type="entry name" value="HTH_MerR1"/>
    <property type="match status" value="1"/>
</dbReference>
<dbReference type="Gene3D" id="1.10.1660.10">
    <property type="match status" value="1"/>
</dbReference>
<dbReference type="InterPro" id="IPR009061">
    <property type="entry name" value="DNA-bd_dom_put_sf"/>
</dbReference>
<dbReference type="InterPro" id="IPR011794">
    <property type="entry name" value="MerR"/>
</dbReference>
<dbReference type="InterPro" id="IPR000551">
    <property type="entry name" value="MerR-type_HTH_dom"/>
</dbReference>
<dbReference type="InterPro" id="IPR047057">
    <property type="entry name" value="MerR_fam"/>
</dbReference>
<dbReference type="InterPro" id="IPR015358">
    <property type="entry name" value="Tscrpt_reg_MerR_DNA-bd"/>
</dbReference>
<dbReference type="NCBIfam" id="TIGR02051">
    <property type="entry name" value="MerR"/>
    <property type="match status" value="1"/>
</dbReference>
<dbReference type="NCBIfam" id="NF010315">
    <property type="entry name" value="PRK13752.1"/>
    <property type="match status" value="1"/>
</dbReference>
<dbReference type="PANTHER" id="PTHR30204:SF69">
    <property type="entry name" value="MERR-FAMILY TRANSCRIPTIONAL REGULATOR"/>
    <property type="match status" value="1"/>
</dbReference>
<dbReference type="PANTHER" id="PTHR30204">
    <property type="entry name" value="REDOX-CYCLING DRUG-SENSING TRANSCRIPTIONAL ACTIVATOR SOXR"/>
    <property type="match status" value="1"/>
</dbReference>
<dbReference type="Pfam" id="PF00376">
    <property type="entry name" value="MerR"/>
    <property type="match status" value="1"/>
</dbReference>
<dbReference type="Pfam" id="PF09278">
    <property type="entry name" value="MerR-DNA-bind"/>
    <property type="match status" value="1"/>
</dbReference>
<dbReference type="PRINTS" id="PR00040">
    <property type="entry name" value="HTHMERR"/>
</dbReference>
<dbReference type="SMART" id="SM00422">
    <property type="entry name" value="HTH_MERR"/>
    <property type="match status" value="1"/>
</dbReference>
<dbReference type="SUPFAM" id="SSF46955">
    <property type="entry name" value="Putative DNA-binding domain"/>
    <property type="match status" value="1"/>
</dbReference>
<dbReference type="PROSITE" id="PS00552">
    <property type="entry name" value="HTH_MERR_1"/>
    <property type="match status" value="1"/>
</dbReference>
<dbReference type="PROSITE" id="PS50937">
    <property type="entry name" value="HTH_MERR_2"/>
    <property type="match status" value="1"/>
</dbReference>
<gene>
    <name type="primary">merR</name>
</gene>